<evidence type="ECO:0000250" key="1">
    <source>
        <dbReference type="UniProtKB" id="P33644"/>
    </source>
</evidence>
<evidence type="ECO:0000250" key="2">
    <source>
        <dbReference type="UniProtKB" id="P84138"/>
    </source>
</evidence>
<evidence type="ECO:0000250" key="3">
    <source>
        <dbReference type="UniProtKB" id="Q1EIR0"/>
    </source>
</evidence>
<evidence type="ECO:0000305" key="4"/>
<keyword id="KW-0186">Copper</keyword>
<keyword id="KW-0378">Hydrolase</keyword>
<keyword id="KW-0479">Metal-binding</keyword>
<keyword id="KW-0560">Oxidoreductase</keyword>
<keyword id="KW-1185">Reference proteome</keyword>
<keyword id="KW-0808">Transferase</keyword>
<keyword id="KW-0862">Zinc</keyword>
<name>PURNU_PSEAE</name>
<protein>
    <recommendedName>
        <fullName>Purine nucleoside phosphorylase PA4543</fullName>
        <ecNumber evidence="2">2.4.2.1</ecNumber>
    </recommendedName>
    <alternativeName>
        <fullName>Adenosine deaminase PA4543</fullName>
        <ecNumber evidence="2">3.5.4.4</ecNumber>
    </alternativeName>
    <alternativeName>
        <fullName>S-methyl-5'-thioadenosine phosphorylase PA4543</fullName>
        <ecNumber evidence="2">2.4.2.28</ecNumber>
    </alternativeName>
</protein>
<sequence>MNAWLTPDWPAPARVRACVTTRSGGVSQAPFDSLNLGAHVDDDPRAVEENRRRLTERLECRPSWLDQVHGVTVVEADPSRVLRADASWSAMPGVACTIMTADCLPALFCDRSGTRVAAAHAGWRGLAAGVLEATVDSLGVPGDELLVWLGPAIGPRAFEVGGEVRDAFVAAHAEARSAFVPSANPGRFMADIYRLARIRLGAHGVTAVHGGGFCTFSDTARFYSYRRSSRTGRFASLVWLQD</sequence>
<comment type="function">
    <text evidence="2">Purine nucleoside enzyme that catalyzes the phosphorolysis of adenosine and inosine nucleosides, yielding D-ribose 1-phosphate and the respective free bases, adenine and hypoxanthine. Also catalyzes the phosphorolysis of S-methyl-5'-thioadenosine into adenine and S-methyl-5-thio-alpha-D-ribose 1-phosphate. Also has adenosine deaminase activity.</text>
</comment>
<comment type="catalytic activity">
    <reaction evidence="2">
        <text>adenosine + phosphate = alpha-D-ribose 1-phosphate + adenine</text>
        <dbReference type="Rhea" id="RHEA:27642"/>
        <dbReference type="ChEBI" id="CHEBI:16335"/>
        <dbReference type="ChEBI" id="CHEBI:16708"/>
        <dbReference type="ChEBI" id="CHEBI:43474"/>
        <dbReference type="ChEBI" id="CHEBI:57720"/>
        <dbReference type="EC" id="2.4.2.1"/>
    </reaction>
    <physiologicalReaction direction="left-to-right" evidence="2">
        <dbReference type="Rhea" id="RHEA:27643"/>
    </physiologicalReaction>
</comment>
<comment type="catalytic activity">
    <reaction evidence="2">
        <text>S-methyl-5'-thioadenosine + phosphate = 5-(methylsulfanyl)-alpha-D-ribose 1-phosphate + adenine</text>
        <dbReference type="Rhea" id="RHEA:11852"/>
        <dbReference type="ChEBI" id="CHEBI:16708"/>
        <dbReference type="ChEBI" id="CHEBI:17509"/>
        <dbReference type="ChEBI" id="CHEBI:43474"/>
        <dbReference type="ChEBI" id="CHEBI:58533"/>
        <dbReference type="EC" id="2.4.2.28"/>
    </reaction>
    <physiologicalReaction direction="left-to-right" evidence="2">
        <dbReference type="Rhea" id="RHEA:11853"/>
    </physiologicalReaction>
</comment>
<comment type="catalytic activity">
    <reaction evidence="2">
        <text>inosine + phosphate = alpha-D-ribose 1-phosphate + hypoxanthine</text>
        <dbReference type="Rhea" id="RHEA:27646"/>
        <dbReference type="ChEBI" id="CHEBI:17368"/>
        <dbReference type="ChEBI" id="CHEBI:17596"/>
        <dbReference type="ChEBI" id="CHEBI:43474"/>
        <dbReference type="ChEBI" id="CHEBI:57720"/>
        <dbReference type="EC" id="2.4.2.1"/>
    </reaction>
    <physiologicalReaction direction="left-to-right" evidence="2">
        <dbReference type="Rhea" id="RHEA:27647"/>
    </physiologicalReaction>
</comment>
<comment type="catalytic activity">
    <reaction evidence="2">
        <text>adenosine + H2O + H(+) = inosine + NH4(+)</text>
        <dbReference type="Rhea" id="RHEA:24408"/>
        <dbReference type="ChEBI" id="CHEBI:15377"/>
        <dbReference type="ChEBI" id="CHEBI:15378"/>
        <dbReference type="ChEBI" id="CHEBI:16335"/>
        <dbReference type="ChEBI" id="CHEBI:17596"/>
        <dbReference type="ChEBI" id="CHEBI:28938"/>
        <dbReference type="EC" id="3.5.4.4"/>
    </reaction>
    <physiologicalReaction direction="left-to-right" evidence="2">
        <dbReference type="Rhea" id="RHEA:24409"/>
    </physiologicalReaction>
</comment>
<comment type="cofactor">
    <cofactor evidence="1">
        <name>Cu(2+)</name>
        <dbReference type="ChEBI" id="CHEBI:29036"/>
    </cofactor>
    <cofactor evidence="2">
        <name>Zn(2+)</name>
        <dbReference type="ChEBI" id="CHEBI:29105"/>
    </cofactor>
</comment>
<comment type="subunit">
    <text evidence="3">Homodimer.</text>
</comment>
<comment type="similarity">
    <text evidence="4">Belongs to the purine nucleoside phosphorylase YfiH/LACC1 family.</text>
</comment>
<accession>P33663</accession>
<feature type="chain" id="PRO_0000163168" description="Purine nucleoside phosphorylase PA4543">
    <location>
        <begin position="1"/>
        <end position="242"/>
    </location>
</feature>
<feature type="binding site" evidence="2">
    <location>
        <position position="69"/>
    </location>
    <ligand>
        <name>Zn(2+)</name>
        <dbReference type="ChEBI" id="CHEBI:29105"/>
        <note>catalytic</note>
    </ligand>
</feature>
<feature type="binding site" evidence="2">
    <location>
        <position position="103"/>
    </location>
    <ligand>
        <name>Zn(2+)</name>
        <dbReference type="ChEBI" id="CHEBI:29105"/>
        <note>catalytic</note>
    </ligand>
</feature>
<feature type="binding site" evidence="2">
    <location>
        <position position="120"/>
    </location>
    <ligand>
        <name>Zn(2+)</name>
        <dbReference type="ChEBI" id="CHEBI:29105"/>
        <note>catalytic</note>
    </ligand>
</feature>
<proteinExistence type="inferred from homology"/>
<reference key="1">
    <citation type="journal article" date="2000" name="Nature">
        <title>Complete genome sequence of Pseudomonas aeruginosa PAO1, an opportunistic pathogen.</title>
        <authorList>
            <person name="Stover C.K."/>
            <person name="Pham X.-Q.T."/>
            <person name="Erwin A.L."/>
            <person name="Mizoguchi S.D."/>
            <person name="Warrener P."/>
            <person name="Hickey M.J."/>
            <person name="Brinkman F.S.L."/>
            <person name="Hufnagle W.O."/>
            <person name="Kowalik D.J."/>
            <person name="Lagrou M."/>
            <person name="Garber R.L."/>
            <person name="Goltry L."/>
            <person name="Tolentino E."/>
            <person name="Westbrock-Wadman S."/>
            <person name="Yuan Y."/>
            <person name="Brody L.L."/>
            <person name="Coulter S.N."/>
            <person name="Folger K.R."/>
            <person name="Kas A."/>
            <person name="Larbig K."/>
            <person name="Lim R.M."/>
            <person name="Smith K.A."/>
            <person name="Spencer D.H."/>
            <person name="Wong G.K.-S."/>
            <person name="Wu Z."/>
            <person name="Paulsen I.T."/>
            <person name="Reizer J."/>
            <person name="Saier M.H. Jr."/>
            <person name="Hancock R.E.W."/>
            <person name="Lory S."/>
            <person name="Olson M.V."/>
        </authorList>
    </citation>
    <scope>NUCLEOTIDE SEQUENCE [LARGE SCALE GENOMIC DNA]</scope>
    <source>
        <strain>ATCC 15692 / DSM 22644 / CIP 104116 / JCM 14847 / LMG 12228 / 1C / PRS 101 / PAO1</strain>
    </source>
</reference>
<reference key="2">
    <citation type="journal article" date="1993" name="Mol. Microbiol.">
        <title>PilS and PilR, a two-component transcriptional regulatory system controlling expression of type 4 fimbriae in Pseudomonas aeruginosa.</title>
        <authorList>
            <person name="Hobbs M."/>
            <person name="Collie E.S.R."/>
            <person name="Free P.D."/>
            <person name="Livingston S.P."/>
            <person name="Mattick J.S."/>
        </authorList>
    </citation>
    <scope>NUCLEOTIDE SEQUENCE [GENOMIC DNA] OF 198-242</scope>
    <source>
        <strain>ATCC 15692 / DSM 22644 / CIP 104116 / JCM 14847 / LMG 12228 / 1C / PRS 101 / PAO1</strain>
    </source>
</reference>
<organism>
    <name type="scientific">Pseudomonas aeruginosa (strain ATCC 15692 / DSM 22644 / CIP 104116 / JCM 14847 / LMG 12228 / 1C / PRS 101 / PAO1)</name>
    <dbReference type="NCBI Taxonomy" id="208964"/>
    <lineage>
        <taxon>Bacteria</taxon>
        <taxon>Pseudomonadati</taxon>
        <taxon>Pseudomonadota</taxon>
        <taxon>Gammaproteobacteria</taxon>
        <taxon>Pseudomonadales</taxon>
        <taxon>Pseudomonadaceae</taxon>
        <taxon>Pseudomonas</taxon>
    </lineage>
</organism>
<gene>
    <name type="ordered locus">PA4543</name>
</gene>
<dbReference type="EC" id="2.4.2.1" evidence="2"/>
<dbReference type="EC" id="3.5.4.4" evidence="2"/>
<dbReference type="EC" id="2.4.2.28" evidence="2"/>
<dbReference type="EMBL" id="AE004091">
    <property type="protein sequence ID" value="AAG07931.1"/>
    <property type="molecule type" value="Genomic_DNA"/>
</dbReference>
<dbReference type="EMBL" id="L06013">
    <property type="protein sequence ID" value="AAA87639.1"/>
    <property type="molecule type" value="Genomic_DNA"/>
</dbReference>
<dbReference type="PIR" id="E83077">
    <property type="entry name" value="E83077"/>
</dbReference>
<dbReference type="RefSeq" id="NP_253233.1">
    <property type="nucleotide sequence ID" value="NC_002516.2"/>
</dbReference>
<dbReference type="SMR" id="P33663"/>
<dbReference type="FunCoup" id="P33663">
    <property type="interactions" value="505"/>
</dbReference>
<dbReference type="STRING" id="208964.PA4543"/>
<dbReference type="PaxDb" id="208964-PA4543"/>
<dbReference type="DNASU" id="878617"/>
<dbReference type="GeneID" id="878617"/>
<dbReference type="KEGG" id="pae:PA4543"/>
<dbReference type="PATRIC" id="fig|208964.12.peg.4754"/>
<dbReference type="PseudoCAP" id="PA4543"/>
<dbReference type="HOGENOM" id="CLU_065784_1_1_6"/>
<dbReference type="InParanoid" id="P33663"/>
<dbReference type="OrthoDB" id="4279at2"/>
<dbReference type="PhylomeDB" id="P33663"/>
<dbReference type="BioCyc" id="PAER208964:G1FZ6-4636-MONOMER"/>
<dbReference type="Proteomes" id="UP000002438">
    <property type="component" value="Chromosome"/>
</dbReference>
<dbReference type="GO" id="GO:0004000">
    <property type="term" value="F:adenosine deaminase activity"/>
    <property type="evidence" value="ECO:0007669"/>
    <property type="project" value="RHEA"/>
</dbReference>
<dbReference type="GO" id="GO:0005507">
    <property type="term" value="F:copper ion binding"/>
    <property type="evidence" value="ECO:0000318"/>
    <property type="project" value="GO_Central"/>
</dbReference>
<dbReference type="GO" id="GO:0016491">
    <property type="term" value="F:oxidoreductase activity"/>
    <property type="evidence" value="ECO:0007669"/>
    <property type="project" value="UniProtKB-KW"/>
</dbReference>
<dbReference type="GO" id="GO:0017061">
    <property type="term" value="F:S-methyl-5-thioadenosine phosphorylase activity"/>
    <property type="evidence" value="ECO:0007669"/>
    <property type="project" value="UniProtKB-EC"/>
</dbReference>
<dbReference type="CDD" id="cd16833">
    <property type="entry name" value="YfiH"/>
    <property type="match status" value="1"/>
</dbReference>
<dbReference type="Gene3D" id="3.60.140.10">
    <property type="entry name" value="CNF1/YfiH-like putative cysteine hydrolases"/>
    <property type="match status" value="1"/>
</dbReference>
<dbReference type="InterPro" id="IPR003730">
    <property type="entry name" value="Cu_polyphenol_OxRdtase"/>
</dbReference>
<dbReference type="InterPro" id="IPR038371">
    <property type="entry name" value="Cu_polyphenol_OxRdtase_sf"/>
</dbReference>
<dbReference type="InterPro" id="IPR011324">
    <property type="entry name" value="Cytotoxic_necrot_fac-like_cat"/>
</dbReference>
<dbReference type="NCBIfam" id="TIGR00726">
    <property type="entry name" value="peptidoglycan editing factor PgeF"/>
    <property type="match status" value="1"/>
</dbReference>
<dbReference type="PANTHER" id="PTHR30616:SF2">
    <property type="entry name" value="PURINE NUCLEOSIDE PHOSPHORYLASE LACC1"/>
    <property type="match status" value="1"/>
</dbReference>
<dbReference type="PANTHER" id="PTHR30616">
    <property type="entry name" value="UNCHARACTERIZED PROTEIN YFIH"/>
    <property type="match status" value="1"/>
</dbReference>
<dbReference type="Pfam" id="PF02578">
    <property type="entry name" value="Cu-oxidase_4"/>
    <property type="match status" value="1"/>
</dbReference>
<dbReference type="SUPFAM" id="SSF64438">
    <property type="entry name" value="CNF1/YfiH-like putative cysteine hydrolases"/>
    <property type="match status" value="1"/>
</dbReference>